<accession>A1B348</accession>
<accession>Q51682</accession>
<dbReference type="EMBL" id="U34353">
    <property type="protein sequence ID" value="AAC44519.1"/>
    <property type="molecule type" value="Genomic_DNA"/>
</dbReference>
<dbReference type="EMBL" id="CP000489">
    <property type="protein sequence ID" value="ABL69942.1"/>
    <property type="molecule type" value="Genomic_DNA"/>
</dbReference>
<dbReference type="PIR" id="S77598">
    <property type="entry name" value="S77598"/>
</dbReference>
<dbReference type="RefSeq" id="WP_011748139.1">
    <property type="nucleotide sequence ID" value="NC_008686.1"/>
</dbReference>
<dbReference type="SMR" id="A1B348"/>
<dbReference type="STRING" id="318586.Pden_1845"/>
<dbReference type="EnsemblBacteria" id="ABL69942">
    <property type="protein sequence ID" value="ABL69942"/>
    <property type="gene ID" value="Pden_1845"/>
</dbReference>
<dbReference type="GeneID" id="93450241"/>
<dbReference type="KEGG" id="pde:Pden_1845"/>
<dbReference type="eggNOG" id="COG2010">
    <property type="taxonomic scope" value="Bacteria"/>
</dbReference>
<dbReference type="HOGENOM" id="CLU_047545_2_0_5"/>
<dbReference type="UniPathway" id="UPA00705"/>
<dbReference type="Proteomes" id="UP000000361">
    <property type="component" value="Chromosome 1"/>
</dbReference>
<dbReference type="GO" id="GO:0005886">
    <property type="term" value="C:plasma membrane"/>
    <property type="evidence" value="ECO:0007669"/>
    <property type="project" value="UniProtKB-SubCell"/>
</dbReference>
<dbReference type="GO" id="GO:0009055">
    <property type="term" value="F:electron transfer activity"/>
    <property type="evidence" value="ECO:0007669"/>
    <property type="project" value="InterPro"/>
</dbReference>
<dbReference type="GO" id="GO:0020037">
    <property type="term" value="F:heme binding"/>
    <property type="evidence" value="ECO:0007669"/>
    <property type="project" value="InterPro"/>
</dbReference>
<dbReference type="GO" id="GO:0005506">
    <property type="term" value="F:iron ion binding"/>
    <property type="evidence" value="ECO:0007669"/>
    <property type="project" value="InterPro"/>
</dbReference>
<dbReference type="GO" id="GO:0016491">
    <property type="term" value="F:oxidoreductase activity"/>
    <property type="evidence" value="ECO:0007669"/>
    <property type="project" value="UniProtKB-KW"/>
</dbReference>
<dbReference type="GO" id="GO:0006119">
    <property type="term" value="P:oxidative phosphorylation"/>
    <property type="evidence" value="ECO:0007669"/>
    <property type="project" value="UniProtKB-UniPathway"/>
</dbReference>
<dbReference type="GO" id="GO:1902600">
    <property type="term" value="P:proton transmembrane transport"/>
    <property type="evidence" value="ECO:0007669"/>
    <property type="project" value="UniProtKB-KW"/>
</dbReference>
<dbReference type="Gene3D" id="6.10.280.130">
    <property type="match status" value="1"/>
</dbReference>
<dbReference type="Gene3D" id="1.10.760.10">
    <property type="entry name" value="Cytochrome c-like domain"/>
    <property type="match status" value="2"/>
</dbReference>
<dbReference type="InterPro" id="IPR032858">
    <property type="entry name" value="CcoP_N"/>
</dbReference>
<dbReference type="InterPro" id="IPR038414">
    <property type="entry name" value="CcoP_N_sf"/>
</dbReference>
<dbReference type="InterPro" id="IPR009056">
    <property type="entry name" value="Cyt_c-like_dom"/>
</dbReference>
<dbReference type="InterPro" id="IPR036909">
    <property type="entry name" value="Cyt_c-like_dom_sf"/>
</dbReference>
<dbReference type="InterPro" id="IPR008168">
    <property type="entry name" value="Cyt_C_IC"/>
</dbReference>
<dbReference type="InterPro" id="IPR004678">
    <property type="entry name" value="Cyt_c_oxidase_cbb3_su3"/>
</dbReference>
<dbReference type="InterPro" id="IPR050597">
    <property type="entry name" value="Cytochrome_c_Oxidase_Subunit"/>
</dbReference>
<dbReference type="NCBIfam" id="TIGR00782">
    <property type="entry name" value="ccoP"/>
    <property type="match status" value="1"/>
</dbReference>
<dbReference type="PANTHER" id="PTHR33751">
    <property type="entry name" value="CBB3-TYPE CYTOCHROME C OXIDASE SUBUNIT FIXP"/>
    <property type="match status" value="1"/>
</dbReference>
<dbReference type="PANTHER" id="PTHR33751:SF1">
    <property type="entry name" value="CBB3-TYPE CYTOCHROME C OXIDASE SUBUNIT FIXP"/>
    <property type="match status" value="1"/>
</dbReference>
<dbReference type="Pfam" id="PF13442">
    <property type="entry name" value="Cytochrome_CBB3"/>
    <property type="match status" value="2"/>
</dbReference>
<dbReference type="Pfam" id="PF14715">
    <property type="entry name" value="FixP_N"/>
    <property type="match status" value="1"/>
</dbReference>
<dbReference type="PIRSF" id="PIRSF000006">
    <property type="entry name" value="Cbb3-Cox_fixP"/>
    <property type="match status" value="1"/>
</dbReference>
<dbReference type="PRINTS" id="PR00605">
    <property type="entry name" value="CYTCHROMECIC"/>
</dbReference>
<dbReference type="SUPFAM" id="SSF46626">
    <property type="entry name" value="Cytochrome c"/>
    <property type="match status" value="2"/>
</dbReference>
<dbReference type="PROSITE" id="PS51007">
    <property type="entry name" value="CYTC"/>
    <property type="match status" value="2"/>
</dbReference>
<proteinExistence type="evidence at protein level"/>
<evidence type="ECO:0000250" key="1">
    <source>
        <dbReference type="UniProtKB" id="D5ARP7"/>
    </source>
</evidence>
<evidence type="ECO:0000250" key="2">
    <source>
        <dbReference type="UniProtKB" id="D9IA45"/>
    </source>
</evidence>
<evidence type="ECO:0000250" key="3">
    <source>
        <dbReference type="UniProtKB" id="Q3J015"/>
    </source>
</evidence>
<evidence type="ECO:0000250" key="4">
    <source>
        <dbReference type="UniProtKB" id="Q52689"/>
    </source>
</evidence>
<evidence type="ECO:0000250" key="5">
    <source>
        <dbReference type="UniProtKB" id="Q8KS19"/>
    </source>
</evidence>
<evidence type="ECO:0000255" key="6"/>
<evidence type="ECO:0000255" key="7">
    <source>
        <dbReference type="PROSITE-ProRule" id="PRU00433"/>
    </source>
</evidence>
<evidence type="ECO:0000256" key="8">
    <source>
        <dbReference type="SAM" id="MobiDB-lite"/>
    </source>
</evidence>
<evidence type="ECO:0000269" key="9">
    <source>
    </source>
</evidence>
<evidence type="ECO:0000305" key="10"/>
<evidence type="ECO:0000312" key="11">
    <source>
        <dbReference type="EMBL" id="AAC44519.1"/>
    </source>
</evidence>
<evidence type="ECO:0000312" key="12">
    <source>
        <dbReference type="EMBL" id="ABL69942.1"/>
    </source>
</evidence>
<sequence>MADTDDEHASPQNPDNRIELERQAADEAHKAKILAHPPEGPGGDPLHPPVTPRPGATRVVRDRKGGRRVVEVPSTGHSWDGIEEYDNPLPRWWLWTFYATIVWGVLYLIAYPAIPLVNGATQGLLGQNYRSDVAAEIQRFNEANAPIQAKLVETPLEEIAADPELANYTANAGAAIFRTWCAQCHGSGAGGATGYPSLLDNDWLWGGTLEEIHTTVMHGIRDPKDADTRYSEMPRFGIDGLLENAQISQVVNHVLELGGLPHDAALAAEGVEVFADNCSSCHAEDGTGDRAQGAPDLTDAVWLYGSDPATITRIVRDGPFGVMPAWTGRLSEADIVAVAAYVHSLGGGE</sequence>
<protein>
    <recommendedName>
        <fullName evidence="1 11">Cbb3-type cytochrome c oxidase subunit CcoP</fullName>
        <shortName evidence="1">Cbb3-Cox subunit CcoP</shortName>
    </recommendedName>
    <alternativeName>
        <fullName evidence="4">C-type cytochrome CcoP</fullName>
        <shortName evidence="1">Cyt c(P)</shortName>
    </alternativeName>
    <alternativeName>
        <fullName evidence="12">Cytochrome c oxidase subunit III</fullName>
    </alternativeName>
</protein>
<name>CCOP_PARDP</name>
<keyword id="KW-0997">Cell inner membrane</keyword>
<keyword id="KW-1003">Cell membrane</keyword>
<keyword id="KW-0249">Electron transport</keyword>
<keyword id="KW-0349">Heme</keyword>
<keyword id="KW-0375">Hydrogen ion transport</keyword>
<keyword id="KW-0406">Ion transport</keyword>
<keyword id="KW-0408">Iron</keyword>
<keyword id="KW-0472">Membrane</keyword>
<keyword id="KW-0479">Metal-binding</keyword>
<keyword id="KW-0560">Oxidoreductase</keyword>
<keyword id="KW-1185">Reference proteome</keyword>
<keyword id="KW-0677">Repeat</keyword>
<keyword id="KW-0679">Respiratory chain</keyword>
<keyword id="KW-0812">Transmembrane</keyword>
<keyword id="KW-1133">Transmembrane helix</keyword>
<keyword id="KW-0813">Transport</keyword>
<comment type="function">
    <text evidence="1 2 9">C-type cytochrome. Part of the cbb3-type cytochrome c oxidase complex. CcoP subunit is required for transferring electrons from donor cytochrome c via its heme groups to CcoO subunit. From there, electrons are shuttled to the catalytic binuclear center of CcoN subunit where oxygen reduction takes place. The complex also functions as a proton pump.</text>
</comment>
<comment type="cofactor">
    <cofactor evidence="2 9">
        <name>heme c</name>
        <dbReference type="ChEBI" id="CHEBI:61717"/>
    </cofactor>
    <text evidence="2 9">Binds 2 heme C groups per subunit.</text>
</comment>
<comment type="pathway">
    <text evidence="1">Energy metabolism; oxidative phosphorylation.</text>
</comment>
<comment type="subunit">
    <text evidence="1 9">Component of the cbb3-type cytochrome c oxidase at least composed of CcoN, CcoO, CcoQ and CcoP.</text>
</comment>
<comment type="subcellular location">
    <subcellularLocation>
        <location evidence="5 6">Cell inner membrane</location>
        <topology evidence="5 6">Single-pass membrane protein</topology>
    </subcellularLocation>
</comment>
<comment type="similarity">
    <text evidence="10">Belongs to the CcoP / FixP family.</text>
</comment>
<reference evidence="10 11" key="1">
    <citation type="journal article" date="1996" name="Mol. Microbiol.">
        <title>Structural and functional analysis of aa3-type and cbb3-type cytochrome c oxidases of Paracoccus denitrificans reveals significant differences in proton-pump design.</title>
        <authorList>
            <person name="de Gier J.W."/>
            <person name="Schepper M."/>
            <person name="Reijnders W.N.M."/>
            <person name="van Dyck S.J."/>
            <person name="Slotboom D.J."/>
            <person name="Warne A."/>
            <person name="Saraste M."/>
            <person name="Krab K."/>
            <person name="Finel M."/>
            <person name="Stouthamer A.H."/>
            <person name="van Spanning R.J.M."/>
            <person name="der Oost J."/>
        </authorList>
    </citation>
    <scope>NUCLEOTIDE SEQUENCE [GENOMIC DNA]</scope>
    <scope>FUNCTION</scope>
    <scope>CATALYTIC ACTIVITY OF THE CYTOCHROME C OXIDASE COMPLEX</scope>
    <scope>COFACTOR</scope>
    <scope>SUBUNIT</scope>
    <source>
        <strain evidence="11">Pd 1222</strain>
    </source>
</reference>
<reference evidence="12" key="2">
    <citation type="submission" date="2006-12" db="EMBL/GenBank/DDBJ databases">
        <title>Complete sequence of chromosome 1 of Paracoccus denitrificans PD1222.</title>
        <authorList>
            <person name="Copeland A."/>
            <person name="Lucas S."/>
            <person name="Lapidus A."/>
            <person name="Barry K."/>
            <person name="Detter J.C."/>
            <person name="Glavina del Rio T."/>
            <person name="Hammon N."/>
            <person name="Israni S."/>
            <person name="Dalin E."/>
            <person name="Tice H."/>
            <person name="Pitluck S."/>
            <person name="Munk A.C."/>
            <person name="Brettin T."/>
            <person name="Bruce D."/>
            <person name="Han C."/>
            <person name="Tapia R."/>
            <person name="Gilna P."/>
            <person name="Schmutz J."/>
            <person name="Larimer F."/>
            <person name="Land M."/>
            <person name="Hauser L."/>
            <person name="Kyrpides N."/>
            <person name="Lykidis A."/>
            <person name="Spiro S."/>
            <person name="Richardson D.J."/>
            <person name="Moir J.W.B."/>
            <person name="Ferguson S.J."/>
            <person name="van Spanning R.J.M."/>
            <person name="Richardson P."/>
        </authorList>
    </citation>
    <scope>NUCLEOTIDE SEQUENCE [LARGE SCALE GENOMIC DNA]</scope>
    <source>
        <strain evidence="12">Pd 1222</strain>
    </source>
</reference>
<gene>
    <name evidence="11" type="primary">ccoP</name>
    <name type="ordered locus">Pden_1845</name>
</gene>
<organism>
    <name type="scientific">Paracoccus denitrificans (strain Pd 1222)</name>
    <dbReference type="NCBI Taxonomy" id="318586"/>
    <lineage>
        <taxon>Bacteria</taxon>
        <taxon>Pseudomonadati</taxon>
        <taxon>Pseudomonadota</taxon>
        <taxon>Alphaproteobacteria</taxon>
        <taxon>Rhodobacterales</taxon>
        <taxon>Paracoccaceae</taxon>
        <taxon>Paracoccus</taxon>
    </lineage>
</organism>
<feature type="chain" id="PRO_0000412287" description="Cbb3-type cytochrome c oxidase subunit CcoP">
    <location>
        <begin position="1"/>
        <end position="349"/>
    </location>
</feature>
<feature type="topological domain" description="Cytoplasmic" evidence="3 6">
    <location>
        <begin position="1"/>
        <end position="96"/>
    </location>
</feature>
<feature type="transmembrane region" description="Helical" evidence="6">
    <location>
        <begin position="97"/>
        <end position="117"/>
    </location>
</feature>
<feature type="topological domain" description="Periplasmic" evidence="3 6">
    <location>
        <begin position="118"/>
        <end position="349"/>
    </location>
</feature>
<feature type="domain" description="Cytochrome c 1" evidence="7">
    <location>
        <begin position="168"/>
        <end position="258"/>
    </location>
</feature>
<feature type="domain" description="Cytochrome c 2" evidence="7">
    <location>
        <begin position="265"/>
        <end position="346"/>
    </location>
</feature>
<feature type="region of interest" description="Disordered" evidence="8">
    <location>
        <begin position="1"/>
        <end position="67"/>
    </location>
</feature>
<feature type="compositionally biased region" description="Basic and acidic residues" evidence="8">
    <location>
        <begin position="16"/>
        <end position="30"/>
    </location>
</feature>
<feature type="binding site" description="covalent" evidence="2">
    <location>
        <position position="181"/>
    </location>
    <ligand>
        <name>heme c</name>
        <dbReference type="ChEBI" id="CHEBI:61717"/>
        <label>1</label>
    </ligand>
</feature>
<feature type="binding site" description="covalent" evidence="2">
    <location>
        <position position="184"/>
    </location>
    <ligand>
        <name>heme c</name>
        <dbReference type="ChEBI" id="CHEBI:61717"/>
        <label>1</label>
    </ligand>
</feature>
<feature type="binding site" description="axial binding residue" evidence="2">
    <location>
        <position position="185"/>
    </location>
    <ligand>
        <name>heme c</name>
        <dbReference type="ChEBI" id="CHEBI:61717"/>
        <label>1</label>
    </ligand>
    <ligandPart>
        <name>Fe</name>
        <dbReference type="ChEBI" id="CHEBI:18248"/>
    </ligandPart>
</feature>
<feature type="binding site" description="axial binding residue" evidence="2">
    <location>
        <position position="233"/>
    </location>
    <ligand>
        <name>heme c</name>
        <dbReference type="ChEBI" id="CHEBI:61717"/>
        <label>2</label>
    </ligand>
    <ligandPart>
        <name>Fe</name>
        <dbReference type="ChEBI" id="CHEBI:18248"/>
    </ligandPart>
</feature>
<feature type="binding site" description="covalent" evidence="2">
    <location>
        <position position="278"/>
    </location>
    <ligand>
        <name>heme c</name>
        <dbReference type="ChEBI" id="CHEBI:61717"/>
        <label>2</label>
    </ligand>
</feature>
<feature type="binding site" description="covalent" evidence="2">
    <location>
        <position position="281"/>
    </location>
    <ligand>
        <name>heme c</name>
        <dbReference type="ChEBI" id="CHEBI:61717"/>
        <label>2</label>
    </ligand>
</feature>
<feature type="binding site" description="axial binding residue" evidence="2">
    <location>
        <position position="282"/>
    </location>
    <ligand>
        <name>heme c</name>
        <dbReference type="ChEBI" id="CHEBI:61717"/>
        <label>2</label>
    </ligand>
    <ligandPart>
        <name>Fe</name>
        <dbReference type="ChEBI" id="CHEBI:18248"/>
    </ligandPart>
</feature>
<feature type="binding site" description="axial binding residue" evidence="2">
    <location>
        <position position="323"/>
    </location>
    <ligand>
        <name>heme c</name>
        <dbReference type="ChEBI" id="CHEBI:61717"/>
        <label>1</label>
    </ligand>
    <ligandPart>
        <name>Fe</name>
        <dbReference type="ChEBI" id="CHEBI:18248"/>
    </ligandPart>
</feature>
<feature type="sequence conflict" description="In Ref. 1; AAC44519." evidence="10" ref="1">
    <original>GP</original>
    <variation>A</variation>
    <location>
        <begin position="40"/>
        <end position="41"/>
    </location>
</feature>